<dbReference type="EMBL" id="DQ126103">
    <property type="protein sequence ID" value="AAZ94043.1"/>
    <property type="molecule type" value="Genomic_RNA"/>
</dbReference>
<dbReference type="RefSeq" id="YP_654546.1">
    <property type="nucleotide sequence ID" value="NC_008173.1"/>
</dbReference>
<dbReference type="KEGG" id="vg:5076665"/>
<dbReference type="Proteomes" id="UP000000349">
    <property type="component" value="Genome"/>
</dbReference>
<dbReference type="GO" id="GO:0039616">
    <property type="term" value="C:T=2 icosahedral viral capsid"/>
    <property type="evidence" value="ECO:0007669"/>
    <property type="project" value="UniProtKB-KW"/>
</dbReference>
<dbReference type="GO" id="GO:0039625">
    <property type="term" value="C:viral inner capsid"/>
    <property type="evidence" value="ECO:0007669"/>
    <property type="project" value="UniProtKB-KW"/>
</dbReference>
<protein>
    <recommendedName>
        <fullName>Major inner capsid protein VP3</fullName>
    </recommendedName>
</protein>
<organismHost>
    <name type="scientific">Micromonas pusilla</name>
    <name type="common">Picoplanktonic green alga</name>
    <name type="synonym">Chromulina pusilla</name>
    <dbReference type="NCBI Taxonomy" id="38833"/>
</organismHost>
<proteinExistence type="inferred from homology"/>
<name>CAPSD_MPRVN</name>
<feature type="chain" id="PRO_0000404157" description="Major inner capsid protein VP3">
    <location>
        <begin position="1"/>
        <end position="1026"/>
    </location>
</feature>
<feature type="region of interest" description="Disordered" evidence="2">
    <location>
        <begin position="60"/>
        <end position="96"/>
    </location>
</feature>
<sequence length="1026" mass="116266">MSNTMPEGYIPRPGKDQTLEAYISEELSKHNLTFNDVLNNEEMMAELSKDDAFMKLKAEFENKDKPEVVEASSNKKEEKVSEPKVEEKKDPEPEKDAPALVVEEVVMDDDDADEVEKPTMEAPKSTVAKLTETQFRIDSSNLMSKIDFTIAYDKLMTVDSFGVEDLVTKSPFYATRLDKPRHMRMDEFCNEFIEPAIPSALGHPNSEGYTDMVGFDWEKNQYLNLYEELGRRSVEAIELDDDANAGDVIIGGVTSLSMIKQVNAIVHDAILPKGRLAYIMAQMRAARCLQFTRVANGQEATPEDKLQAYMDAYMNPTYTRALRIRTPEPRVVTYNKAIDYVMYRLTLNADNDFISPMVQISDSIDVGRGVRSRSYQAATTVMSVIASSHRNLERPMTSARAPAKVITAFTDLVAPPAAEAMQKLGSYCLGGRRAELTVDMTDPILQSTDSVLAPIAAAANLILLDTNRLGNDIKRTLVYRMLSPFYGTGTRAEVDRINFNNIPRIVLTPIPDRRGLHGRLANFIRRQLTKPAYGRMDRNDSRIWRADIQTTPMLPFVPAGGMTPLSMHIGDERLENQAYAPQANELKVSLMDFVKMFDLMHARQGKETYLSSQFSAILTNESSYLYNSISMVMRTMIRGWESLDLLPPLDGAVPGALEMDRTEAFVLPFTGAVSFICYGIEDDGLEYVPWEQRKEIPMPSSFPMLLDMEIRVANELLLEAADPAGRFTRSDMLINQDEFINMAEFIMKKYLTSIDGGEFGTRYRLHWYLFEGIRIHNRTLQTPGIEDLKVARRILDGVKYPEDIATAVYIKIYESVNPIDLVNPDPQRSDYQVYMEEIPADDEILEIKDIVTYRREDGGEDFNFTPYLHSGETFNLDLIRKLAKSIPGDHRYVKVPTKVTVKPVELLDNVDVIAEDFTVALKFKKGVNEMRFEASDIPLYYRWDKFNGRSQLTLDVRVFPDTNVLLDHVMESDPRMGYAPQVLNDGTVGWVSTLSGNVYLEERKVCRREEEVLKSGIDLLIDPYGV</sequence>
<accession>Q1I0U9</accession>
<keyword id="KW-0167">Capsid protein</keyword>
<keyword id="KW-1153">Inner capsid protein</keyword>
<keyword id="KW-1185">Reference proteome</keyword>
<keyword id="KW-1141">T=2 icosahedral capsid protein</keyword>
<keyword id="KW-0946">Virion</keyword>
<reference key="1">
    <citation type="journal article" date="2006" name="J. Gen. Virol.">
        <title>Micromonas pusilla reovirus: a new member of the family Reoviridae assigned to a novel proposed genus (Mimoreovirus).</title>
        <authorList>
            <person name="Attoui H."/>
            <person name="Jaafar F.M."/>
            <person name="Belhouchet M."/>
            <person name="de Micco P."/>
            <person name="de Lamballerie X."/>
            <person name="Brussaard C.P."/>
        </authorList>
    </citation>
    <scope>NUCLEOTIDE SEQUENCE [GENOMIC RNA]</scope>
</reference>
<comment type="function">
    <text evidence="1">Self-assembles to form an icosahedral capsid with a pseudo T=2 symmetry, about 60 nm in diameter, and consisting of 120 VP3 subunits. The capsid encapsulates the genomic RNA (By similarity).</text>
</comment>
<comment type="subcellular location">
    <subcellularLocation>
        <location evidence="3">Virion</location>
    </subcellularLocation>
</comment>
<gene>
    <name type="primary">S3</name>
</gene>
<evidence type="ECO:0000250" key="1"/>
<evidence type="ECO:0000256" key="2">
    <source>
        <dbReference type="SAM" id="MobiDB-lite"/>
    </source>
</evidence>
<evidence type="ECO:0000305" key="3"/>
<organism>
    <name type="scientific">Micromonas pusilla reovirus (isolate Netherlands/2005)</name>
    <name type="common">MpRV</name>
    <dbReference type="NCBI Taxonomy" id="649596"/>
    <lineage>
        <taxon>Viruses</taxon>
        <taxon>Riboviria</taxon>
        <taxon>Orthornavirae</taxon>
        <taxon>Duplornaviricota</taxon>
        <taxon>Resentoviricetes</taxon>
        <taxon>Reovirales</taxon>
        <taxon>Sedoreoviridae</taxon>
        <taxon>Mimoreovirus</taxon>
        <taxon>Micromonas pusilla reovirus</taxon>
    </lineage>
</organism>